<proteinExistence type="evidence at protein level"/>
<name>YR327_MIMIV</name>
<reference key="1">
    <citation type="journal article" date="2004" name="Science">
        <title>The 1.2-megabase genome sequence of Mimivirus.</title>
        <authorList>
            <person name="Raoult D."/>
            <person name="Audic S."/>
            <person name="Robert C."/>
            <person name="Abergel C."/>
            <person name="Renesto P."/>
            <person name="Ogata H."/>
            <person name="La Scola B."/>
            <person name="Susan M."/>
            <person name="Claverie J.-M."/>
        </authorList>
    </citation>
    <scope>NUCLEOTIDE SEQUENCE [LARGE SCALE GENOMIC DNA]</scope>
    <source>
        <strain>Rowbotham-Bradford</strain>
    </source>
</reference>
<reference key="2">
    <citation type="journal article" date="2006" name="J. Virol.">
        <title>Mimivirus giant particles incorporate a large fraction of anonymous and unique gene products.</title>
        <authorList>
            <person name="Renesto P."/>
            <person name="Abergel C."/>
            <person name="Decloquement P."/>
            <person name="Moinier D."/>
            <person name="Azza S."/>
            <person name="Ogata H."/>
            <person name="Fourquet P."/>
            <person name="Gorvel J.-P."/>
            <person name="Claverie J.-M."/>
            <person name="Raoult D."/>
        </authorList>
    </citation>
    <scope>IDENTIFICATION BY MASS SPECTROMETRY [LARGE SCALE ANALYSIS]</scope>
    <scope>SUBCELLULAR LOCATION</scope>
</reference>
<evidence type="ECO:0000256" key="1">
    <source>
        <dbReference type="SAM" id="MobiDB-lite"/>
    </source>
</evidence>
<evidence type="ECO:0000269" key="2">
    <source>
    </source>
</evidence>
<protein>
    <recommendedName>
        <fullName>Uncharacterized protein R327</fullName>
    </recommendedName>
</protein>
<accession>Q5UQR4</accession>
<organismHost>
    <name type="scientific">Acanthamoeba polyphaga</name>
    <name type="common">Amoeba</name>
    <dbReference type="NCBI Taxonomy" id="5757"/>
</organismHost>
<dbReference type="EMBL" id="AY653733">
    <property type="protein sequence ID" value="AAV50596.1"/>
    <property type="molecule type" value="Genomic_DNA"/>
</dbReference>
<dbReference type="Proteomes" id="UP000001134">
    <property type="component" value="Genome"/>
</dbReference>
<dbReference type="GO" id="GO:0044423">
    <property type="term" value="C:virion component"/>
    <property type="evidence" value="ECO:0007669"/>
    <property type="project" value="UniProtKB-KW"/>
</dbReference>
<feature type="chain" id="PRO_0000253419" description="Uncharacterized protein R327">
    <location>
        <begin position="1"/>
        <end position="1588"/>
    </location>
</feature>
<feature type="region of interest" description="Disordered" evidence="1">
    <location>
        <begin position="486"/>
        <end position="515"/>
    </location>
</feature>
<feature type="region of interest" description="Disordered" evidence="1">
    <location>
        <begin position="1146"/>
        <end position="1176"/>
    </location>
</feature>
<feature type="compositionally biased region" description="Basic and acidic residues" evidence="1">
    <location>
        <begin position="486"/>
        <end position="495"/>
    </location>
</feature>
<feature type="compositionally biased region" description="Polar residues" evidence="1">
    <location>
        <begin position="498"/>
        <end position="507"/>
    </location>
</feature>
<feature type="compositionally biased region" description="Low complexity" evidence="1">
    <location>
        <begin position="1150"/>
        <end position="1169"/>
    </location>
</feature>
<gene>
    <name type="ordered locus">MIMI_R327</name>
</gene>
<keyword id="KW-1185">Reference proteome</keyword>
<keyword id="KW-0946">Virion</keyword>
<sequence>MVDVYNELGLNYDPNFEEQRNLIDVYLRIYFPKIRPEEFISILDFLNESASDAKKGIEKNKIRTVYDTIKNNLILENEPMRDIEITKKKYEKEYVKLFKENYVTQSFIRAYLLDRGKKIDLFRIFDNFILNENYPFIQYQPPDGTPRSRYNEKYLLENERKEIIMKWFENTPWGISFKVRVSDKSDYKYMAINLSDNGRIDYKIQWKEEDMQTVDDIDKTYSFVKDLIRKINRENERFGIKLKIPSDDQFKFAFINTIQKFELPDNFAINHNDLSEFSRYFFPYVALVIEPRKRQSKTKTTERDERSKFGTYLRYKRVSKYDNKTKIEHRIVFFMRNYEYNDQSLSNEISKEFNITEEQALEEINAVRERYPNIKKSRKVLKKLENIPKYKPPGIGVDIQGKTRNNYKMRIAGARDRAQLNRIITFMNILIYLYAETYLYKRPDRQRMKDLLQKLTKIARRRNKVDEIVNHETPIKSVKQMTNIDRKRLTSKTEDDQNQWTRDCQNSGEDKKRRPQQFLNVEELQKLGYVWNPKLGDINFGHYERKIMVDSNGRTDSNKKKSEVVLRAVMLPLDDSGNNYVYYTCGPEENGKHMYIGFLKSKNPYGEAKPCCFIKDQLYSKNNDKRNLFLKSIGLIQNDESEVNKIVGDQLYILQSSNKIQEGRFAFLPKYLDIFLNAMLNNERVIKNHYLVSTTTGYYFKYGTKQDEYRYLNAVGSVLDLSIEDLRNKLSSSLTKDKNQLLFTSLNNGDIRAQFGSMESYLTYINTNKYLEYPLLNDLICSPGVINKYGLNIIIFQRKIRIIRKSFEREKIREHYYIVCQNHENIEDLIDPDRETILIVKEGKNYYPIILVKKEDENTKEVSITKTFQYNSNPENIVSHIFKYYEVNCQQEFKLLIKEKSNSNLNAKETNKILISLGIKEYVPKYQMIDARFKCRYLITNAGYIIPVIPSGIVKNVNIISTVNNYLKDYTTTQKYLTDLSKLTKNKLKIKPIGVFYKDKRQKSYVISAIMTEGYDAVPIIERSMTSEYIKKEKLLTQGRPNDEDIDRDISRGKSSIVVDKRVYEVSKNKYETETYQLFRYHLSYFLNNTTEGGKFKKEIENIINSEDINKRERKLELKNVLYRMTNADLSKTFNQLISRLNKQFGGQDNVSDQSENQSENQSLESETSPIVRELNPLTQANSPISIIQEPDTIQIIPEDFVPGRRNNLRESFVNTDVDEFDYSEQINPLDEPFDYATNKEPMAESVPFPKNEKTWLSIMPDSKIIDYPSYILKNNREYCYINKNKDACNINKHCAWNNSKNLCLFNVKRIQLIDFINQVTEELIQNELRASEILRRGEYFVSNIVDYNVFTERPGERIVMASNSNLEKILSELFGKENIPRIGKKRYKFDNTQTYEQLNFDNPLKETSIWYIQNIIDNNNTVFRAFANTYYWLVHPYDEVSMRNIGYYSPLQTTLSNIYKSQVINWLLQQENQDMIQKISSYIRYNKVEDFVTKLSMDVNTISSGIVELCILSILYETIIYVNDEYFNVIYVLHPTQGIVYDYKKSKNKFTNEKYQSYKKVIDIRFRYSSNSNYPDYIDALYPKKNN</sequence>
<comment type="subcellular location">
    <subcellularLocation>
        <location evidence="2">Virion</location>
    </subcellularLocation>
</comment>
<organism>
    <name type="scientific">Acanthamoeba polyphaga mimivirus</name>
    <name type="common">APMV</name>
    <dbReference type="NCBI Taxonomy" id="212035"/>
    <lineage>
        <taxon>Viruses</taxon>
        <taxon>Varidnaviria</taxon>
        <taxon>Bamfordvirae</taxon>
        <taxon>Nucleocytoviricota</taxon>
        <taxon>Megaviricetes</taxon>
        <taxon>Imitervirales</taxon>
        <taxon>Mimiviridae</taxon>
        <taxon>Megamimivirinae</taxon>
        <taxon>Mimivirus</taxon>
        <taxon>Mimivirus bradfordmassiliense</taxon>
    </lineage>
</organism>